<keyword id="KW-0972">Capsule biogenesis/degradation</keyword>
<keyword id="KW-0998">Cell outer membrane</keyword>
<keyword id="KW-0406">Ion transport</keyword>
<keyword id="KW-0449">Lipoprotein</keyword>
<keyword id="KW-0472">Membrane</keyword>
<keyword id="KW-0564">Palmitate</keyword>
<keyword id="KW-0625">Polysaccharide transport</keyword>
<keyword id="KW-0626">Porin</keyword>
<keyword id="KW-0732">Signal</keyword>
<keyword id="KW-0762">Sugar transport</keyword>
<keyword id="KW-0812">Transmembrane</keyword>
<keyword id="KW-1134">Transmembrane beta strand</keyword>
<keyword id="KW-0813">Transport</keyword>
<gene>
    <name type="primary">ctrA</name>
</gene>
<comment type="function">
    <text>Involved in transport of capsular polysaccharides to the cell surface. May function as a membrane anchor for capsular polysaccharides. Possible porin properties.</text>
</comment>
<comment type="subcellular location">
    <subcellularLocation>
        <location>Cell outer membrane</location>
        <topology>Multi-pass membrane protein</topology>
    </subcellularLocation>
</comment>
<comment type="similarity">
    <text evidence="3">Belongs to the BexD/CtrA/VexA family.</text>
</comment>
<sequence>MFKVKFYIRHAVLLLCGSLIVGCSAIPSSGPSAKKIVSLGQQSEVQIPEVELIDVNHTVAQLLYKAQINQSFTQFGDGYASAGTLNIGDVLDIMIWEAPPAVLFGGGLSSMGSGSAHQTKLPEQLVTARGTVSVPFVGDISVVGKTPGQVQEIIKGRLKKMANQPQVMVRLVQNNAANVSVIRAGNSVRMPLTAAGERVLDAVAAVGGSTANVQDTNVQLTRGNVVRTVALEDLVANPRQNILLRRGDVVTMITNPYTFTSMGAVGRTQEIGFSARGLSLSEAIGRMGGLQDRRSDARGVFVFRYTPLVELPAERQDKWIAQGYGSEAEIPTVYRVNMADAHSLFSMQRFPVKNKDVLYVSNAPLAEVQKFLSFVFSPVTSGANSINNLTN</sequence>
<protein>
    <recommendedName>
        <fullName>Capsule polysaccharide export outer membrane protein CtrA</fullName>
    </recommendedName>
</protein>
<evidence type="ECO:0000255" key="1"/>
<evidence type="ECO:0000255" key="2">
    <source>
        <dbReference type="PROSITE-ProRule" id="PRU00303"/>
    </source>
</evidence>
<evidence type="ECO:0000305" key="3"/>
<name>CTRA_NEIME</name>
<reference key="1">
    <citation type="journal article" date="1992" name="Infect. Immun.">
        <title>Conserved outer membrane protein of Neisseria meningitidis involved in capsule expression.</title>
        <authorList>
            <person name="Frosch M."/>
            <person name="Mueller D."/>
            <person name="Bousset K."/>
            <person name="Mueller A."/>
        </authorList>
    </citation>
    <scope>NUCLEOTIDE SEQUENCE [GENOMIC DNA]</scope>
    <source>
        <strain>C1701</strain>
        <strain>Serogroup Y</strain>
        <strain>W135</strain>
    </source>
</reference>
<dbReference type="EMBL" id="M57677">
    <property type="protein sequence ID" value="AAA25450.1"/>
    <property type="molecule type" value="Genomic_DNA"/>
</dbReference>
<dbReference type="RefSeq" id="WP_002215290.1">
    <property type="nucleotide sequence ID" value="NZ_WSPC01000056.1"/>
</dbReference>
<dbReference type="SMR" id="P0A0V9"/>
<dbReference type="OMA" id="KMGGLID"/>
<dbReference type="GO" id="GO:0009279">
    <property type="term" value="C:cell outer membrane"/>
    <property type="evidence" value="ECO:0007669"/>
    <property type="project" value="UniProtKB-SubCell"/>
</dbReference>
<dbReference type="GO" id="GO:0046930">
    <property type="term" value="C:pore complex"/>
    <property type="evidence" value="ECO:0007669"/>
    <property type="project" value="UniProtKB-KW"/>
</dbReference>
<dbReference type="GO" id="GO:0015159">
    <property type="term" value="F:polysaccharide transmembrane transporter activity"/>
    <property type="evidence" value="ECO:0007669"/>
    <property type="project" value="InterPro"/>
</dbReference>
<dbReference type="GO" id="GO:0015288">
    <property type="term" value="F:porin activity"/>
    <property type="evidence" value="ECO:0007669"/>
    <property type="project" value="UniProtKB-KW"/>
</dbReference>
<dbReference type="GO" id="GO:0006811">
    <property type="term" value="P:monoatomic ion transport"/>
    <property type="evidence" value="ECO:0007669"/>
    <property type="project" value="UniProtKB-KW"/>
</dbReference>
<dbReference type="Gene3D" id="3.10.560.10">
    <property type="entry name" value="Outer membrane lipoprotein wza domain like"/>
    <property type="match status" value="2"/>
</dbReference>
<dbReference type="Gene3D" id="3.30.1950.10">
    <property type="entry name" value="wza like domain"/>
    <property type="match status" value="1"/>
</dbReference>
<dbReference type="InterPro" id="IPR049712">
    <property type="entry name" value="Poly_export"/>
</dbReference>
<dbReference type="InterPro" id="IPR003715">
    <property type="entry name" value="Poly_export_N"/>
</dbReference>
<dbReference type="InterPro" id="IPR054765">
    <property type="entry name" value="SLBB_dom"/>
</dbReference>
<dbReference type="PANTHER" id="PTHR33619">
    <property type="entry name" value="POLYSACCHARIDE EXPORT PROTEIN GFCE-RELATED"/>
    <property type="match status" value="1"/>
</dbReference>
<dbReference type="PANTHER" id="PTHR33619:SF3">
    <property type="entry name" value="POLYSACCHARIDE EXPORT PROTEIN GFCE-RELATED"/>
    <property type="match status" value="1"/>
</dbReference>
<dbReference type="Pfam" id="PF02563">
    <property type="entry name" value="Poly_export"/>
    <property type="match status" value="1"/>
</dbReference>
<dbReference type="Pfam" id="PF22461">
    <property type="entry name" value="SLBB_2"/>
    <property type="match status" value="1"/>
</dbReference>
<dbReference type="PROSITE" id="PS51257">
    <property type="entry name" value="PROKAR_LIPOPROTEIN"/>
    <property type="match status" value="1"/>
</dbReference>
<feature type="signal peptide" evidence="2">
    <location>
        <begin position="1"/>
        <end position="22"/>
    </location>
</feature>
<feature type="chain" id="PRO_0000025219" description="Capsule polysaccharide export outer membrane protein CtrA">
    <location>
        <begin position="23"/>
        <end position="391"/>
    </location>
</feature>
<feature type="topological domain" description="Periplasmic" evidence="1">
    <location>
        <begin position="23"/>
        <end position="33"/>
    </location>
</feature>
<feature type="transmembrane region" description="Beta stranded" evidence="1">
    <location>
        <begin position="34"/>
        <end position="43"/>
    </location>
</feature>
<feature type="topological domain" description="Extracellular" evidence="1">
    <location>
        <begin position="44"/>
        <end position="57"/>
    </location>
</feature>
<feature type="transmembrane region" description="Beta stranded" evidence="1">
    <location>
        <begin position="58"/>
        <end position="67"/>
    </location>
</feature>
<feature type="topological domain" description="Periplasmic" evidence="1">
    <location>
        <begin position="68"/>
        <end position="83"/>
    </location>
</feature>
<feature type="transmembrane region" description="Beta stranded" evidence="1">
    <location>
        <begin position="84"/>
        <end position="93"/>
    </location>
</feature>
<feature type="topological domain" description="Extracellular" evidence="1">
    <location>
        <begin position="94"/>
        <end position="117"/>
    </location>
</feature>
<feature type="transmembrane region" description="Beta stranded" evidence="1">
    <location>
        <begin position="118"/>
        <end position="127"/>
    </location>
</feature>
<feature type="topological domain" description="Periplasmic" evidence="1">
    <location>
        <begin position="128"/>
        <end position="135"/>
    </location>
</feature>
<feature type="transmembrane region" description="Beta stranded" evidence="1">
    <location>
        <begin position="136"/>
        <end position="145"/>
    </location>
</feature>
<feature type="topological domain" description="Extracellular" evidence="1">
    <location>
        <begin position="146"/>
        <end position="148"/>
    </location>
</feature>
<feature type="transmembrane region" description="Beta stranded" evidence="1">
    <location>
        <begin position="149"/>
        <end position="158"/>
    </location>
</feature>
<feature type="topological domain" description="Periplasmic" evidence="1">
    <location>
        <begin position="159"/>
        <end position="161"/>
    </location>
</feature>
<feature type="transmembrane region" description="Beta stranded" evidence="1">
    <location>
        <begin position="162"/>
        <end position="171"/>
    </location>
</feature>
<feature type="topological domain" description="Extracellular" evidence="1">
    <location>
        <begin position="172"/>
        <end position="178"/>
    </location>
</feature>
<feature type="transmembrane region" description="Beta stranded" evidence="1">
    <location>
        <begin position="179"/>
        <end position="188"/>
    </location>
</feature>
<feature type="topological domain" description="Periplasmic" evidence="1">
    <location>
        <begin position="189"/>
        <end position="391"/>
    </location>
</feature>
<feature type="lipid moiety-binding region" description="N-palmitoyl cysteine" evidence="2">
    <location>
        <position position="23"/>
    </location>
</feature>
<feature type="lipid moiety-binding region" description="S-diacylglycerol cysteine" evidence="2">
    <location>
        <position position="23"/>
    </location>
</feature>
<proteinExistence type="inferred from homology"/>
<accession>P0A0V9</accession>
<accession>P32013</accession>
<organism>
    <name type="scientific">Neisseria meningitidis</name>
    <dbReference type="NCBI Taxonomy" id="487"/>
    <lineage>
        <taxon>Bacteria</taxon>
        <taxon>Pseudomonadati</taxon>
        <taxon>Pseudomonadota</taxon>
        <taxon>Betaproteobacteria</taxon>
        <taxon>Neisseriales</taxon>
        <taxon>Neisseriaceae</taxon>
        <taxon>Neisseria</taxon>
    </lineage>
</organism>